<name>LFTR_ALCBS</name>
<protein>
    <recommendedName>
        <fullName evidence="1">Leucyl/phenylalanyl-tRNA--protein transferase</fullName>
        <ecNumber evidence="1">2.3.2.6</ecNumber>
    </recommendedName>
    <alternativeName>
        <fullName evidence="1">L/F-transferase</fullName>
    </alternativeName>
    <alternativeName>
        <fullName evidence="1">Leucyltransferase</fullName>
    </alternativeName>
    <alternativeName>
        <fullName evidence="1">Phenyalanyltransferase</fullName>
    </alternativeName>
</protein>
<accession>Q0VQ12</accession>
<keyword id="KW-0012">Acyltransferase</keyword>
<keyword id="KW-0963">Cytoplasm</keyword>
<keyword id="KW-1185">Reference proteome</keyword>
<keyword id="KW-0808">Transferase</keyword>
<feature type="chain" id="PRO_0000258041" description="Leucyl/phenylalanyl-tRNA--protein transferase">
    <location>
        <begin position="1"/>
        <end position="242"/>
    </location>
</feature>
<dbReference type="EC" id="2.3.2.6" evidence="1"/>
<dbReference type="EMBL" id="AM286690">
    <property type="protein sequence ID" value="CAL16736.1"/>
    <property type="molecule type" value="Genomic_DNA"/>
</dbReference>
<dbReference type="RefSeq" id="WP_011588570.1">
    <property type="nucleotide sequence ID" value="NC_008260.1"/>
</dbReference>
<dbReference type="SMR" id="Q0VQ12"/>
<dbReference type="STRING" id="393595.ABO_1288"/>
<dbReference type="KEGG" id="abo:ABO_1288"/>
<dbReference type="eggNOG" id="COG2360">
    <property type="taxonomic scope" value="Bacteria"/>
</dbReference>
<dbReference type="HOGENOM" id="CLU_075045_0_0_6"/>
<dbReference type="OrthoDB" id="9790282at2"/>
<dbReference type="Proteomes" id="UP000008871">
    <property type="component" value="Chromosome"/>
</dbReference>
<dbReference type="GO" id="GO:0005737">
    <property type="term" value="C:cytoplasm"/>
    <property type="evidence" value="ECO:0007669"/>
    <property type="project" value="UniProtKB-SubCell"/>
</dbReference>
<dbReference type="GO" id="GO:0008914">
    <property type="term" value="F:leucyl-tRNA--protein transferase activity"/>
    <property type="evidence" value="ECO:0007669"/>
    <property type="project" value="UniProtKB-UniRule"/>
</dbReference>
<dbReference type="GO" id="GO:0030163">
    <property type="term" value="P:protein catabolic process"/>
    <property type="evidence" value="ECO:0007669"/>
    <property type="project" value="UniProtKB-UniRule"/>
</dbReference>
<dbReference type="Gene3D" id="3.40.630.70">
    <property type="entry name" value="Leucyl/phenylalanyl-tRNA-protein transferase, C-terminal domain"/>
    <property type="match status" value="1"/>
</dbReference>
<dbReference type="Gene3D" id="3.30.70.3550">
    <property type="entry name" value="Leucyl/phenylalanyl-tRNA-protein transferase, N-terminal domain"/>
    <property type="match status" value="1"/>
</dbReference>
<dbReference type="HAMAP" id="MF_00688">
    <property type="entry name" value="Leu_Phe_trans"/>
    <property type="match status" value="1"/>
</dbReference>
<dbReference type="InterPro" id="IPR016181">
    <property type="entry name" value="Acyl_CoA_acyltransferase"/>
</dbReference>
<dbReference type="InterPro" id="IPR004616">
    <property type="entry name" value="Leu/Phe-tRNA_Trfase"/>
</dbReference>
<dbReference type="InterPro" id="IPR042203">
    <property type="entry name" value="Leu/Phe-tRNA_Trfase_C"/>
</dbReference>
<dbReference type="InterPro" id="IPR042221">
    <property type="entry name" value="Leu/Phe-tRNA_Trfase_N"/>
</dbReference>
<dbReference type="NCBIfam" id="TIGR00667">
    <property type="entry name" value="aat"/>
    <property type="match status" value="1"/>
</dbReference>
<dbReference type="PANTHER" id="PTHR30098">
    <property type="entry name" value="LEUCYL/PHENYLALANYL-TRNA--PROTEIN TRANSFERASE"/>
    <property type="match status" value="1"/>
</dbReference>
<dbReference type="PANTHER" id="PTHR30098:SF2">
    <property type="entry name" value="LEUCYL_PHENYLALANYL-TRNA--PROTEIN TRANSFERASE"/>
    <property type="match status" value="1"/>
</dbReference>
<dbReference type="Pfam" id="PF03588">
    <property type="entry name" value="Leu_Phe_trans"/>
    <property type="match status" value="1"/>
</dbReference>
<dbReference type="SUPFAM" id="SSF55729">
    <property type="entry name" value="Acyl-CoA N-acyltransferases (Nat)"/>
    <property type="match status" value="1"/>
</dbReference>
<reference key="1">
    <citation type="journal article" date="2006" name="Nat. Biotechnol.">
        <title>Genome sequence of the ubiquitous hydrocarbon-degrading marine bacterium Alcanivorax borkumensis.</title>
        <authorList>
            <person name="Schneiker S."/>
            <person name="Martins dos Santos V.A.P."/>
            <person name="Bartels D."/>
            <person name="Bekel T."/>
            <person name="Brecht M."/>
            <person name="Buhrmester J."/>
            <person name="Chernikova T.N."/>
            <person name="Denaro R."/>
            <person name="Ferrer M."/>
            <person name="Gertler C."/>
            <person name="Goesmann A."/>
            <person name="Golyshina O.V."/>
            <person name="Kaminski F."/>
            <person name="Khachane A.N."/>
            <person name="Lang S."/>
            <person name="Linke B."/>
            <person name="McHardy A.C."/>
            <person name="Meyer F."/>
            <person name="Nechitaylo T."/>
            <person name="Puehler A."/>
            <person name="Regenhardt D."/>
            <person name="Rupp O."/>
            <person name="Sabirova J.S."/>
            <person name="Selbitschka W."/>
            <person name="Yakimov M.M."/>
            <person name="Timmis K.N."/>
            <person name="Vorhoelter F.-J."/>
            <person name="Weidner S."/>
            <person name="Kaiser O."/>
            <person name="Golyshin P.N."/>
        </authorList>
    </citation>
    <scope>NUCLEOTIDE SEQUENCE [LARGE SCALE GENOMIC DNA]</scope>
    <source>
        <strain>ATCC 700651 / DSM 11573 / NCIMB 13689 / SK2</strain>
    </source>
</reference>
<proteinExistence type="inferred from homology"/>
<gene>
    <name evidence="1" type="primary">aat</name>
    <name type="ordered locus">ABO_1288</name>
</gene>
<sequence>MVPWLEPGEPFPDTRLALTDPDGLLAAGSDLSPDTLLRAYSTGIFPWYDAESQPILWWSPAPRCVIQLEQLHVSRSLARHLRRADFTVTFDRAFETVMRTCAAPRQDEAGTWISEDMLAAYCRLHELGYAHSVEIWQNGALAGCLYGIQLGQMFFGESMASPQRNGSKVALVALRNFARKLDIQLLDAQIENPHLMSMGAEMMPRSAFEAHLQRWIPSQPAPSHWPGDRFDWPDLQAAHQAF</sequence>
<organism>
    <name type="scientific">Alcanivorax borkumensis (strain ATCC 700651 / DSM 11573 / NCIMB 13689 / SK2)</name>
    <dbReference type="NCBI Taxonomy" id="393595"/>
    <lineage>
        <taxon>Bacteria</taxon>
        <taxon>Pseudomonadati</taxon>
        <taxon>Pseudomonadota</taxon>
        <taxon>Gammaproteobacteria</taxon>
        <taxon>Oceanospirillales</taxon>
        <taxon>Alcanivoracaceae</taxon>
        <taxon>Alcanivorax</taxon>
    </lineage>
</organism>
<comment type="function">
    <text evidence="1">Functions in the N-end rule pathway of protein degradation where it conjugates Leu, Phe and, less efficiently, Met from aminoacyl-tRNAs to the N-termini of proteins containing an N-terminal arginine or lysine.</text>
</comment>
<comment type="catalytic activity">
    <reaction evidence="1">
        <text>N-terminal L-lysyl-[protein] + L-leucyl-tRNA(Leu) = N-terminal L-leucyl-L-lysyl-[protein] + tRNA(Leu) + H(+)</text>
        <dbReference type="Rhea" id="RHEA:12340"/>
        <dbReference type="Rhea" id="RHEA-COMP:9613"/>
        <dbReference type="Rhea" id="RHEA-COMP:9622"/>
        <dbReference type="Rhea" id="RHEA-COMP:12670"/>
        <dbReference type="Rhea" id="RHEA-COMP:12671"/>
        <dbReference type="ChEBI" id="CHEBI:15378"/>
        <dbReference type="ChEBI" id="CHEBI:65249"/>
        <dbReference type="ChEBI" id="CHEBI:78442"/>
        <dbReference type="ChEBI" id="CHEBI:78494"/>
        <dbReference type="ChEBI" id="CHEBI:133043"/>
        <dbReference type="EC" id="2.3.2.6"/>
    </reaction>
</comment>
<comment type="catalytic activity">
    <reaction evidence="1">
        <text>N-terminal L-arginyl-[protein] + L-leucyl-tRNA(Leu) = N-terminal L-leucyl-L-arginyl-[protein] + tRNA(Leu) + H(+)</text>
        <dbReference type="Rhea" id="RHEA:50416"/>
        <dbReference type="Rhea" id="RHEA-COMP:9613"/>
        <dbReference type="Rhea" id="RHEA-COMP:9622"/>
        <dbReference type="Rhea" id="RHEA-COMP:12672"/>
        <dbReference type="Rhea" id="RHEA-COMP:12673"/>
        <dbReference type="ChEBI" id="CHEBI:15378"/>
        <dbReference type="ChEBI" id="CHEBI:64719"/>
        <dbReference type="ChEBI" id="CHEBI:78442"/>
        <dbReference type="ChEBI" id="CHEBI:78494"/>
        <dbReference type="ChEBI" id="CHEBI:133044"/>
        <dbReference type="EC" id="2.3.2.6"/>
    </reaction>
</comment>
<comment type="catalytic activity">
    <reaction evidence="1">
        <text>L-phenylalanyl-tRNA(Phe) + an N-terminal L-alpha-aminoacyl-[protein] = an N-terminal L-phenylalanyl-L-alpha-aminoacyl-[protein] + tRNA(Phe)</text>
        <dbReference type="Rhea" id="RHEA:43632"/>
        <dbReference type="Rhea" id="RHEA-COMP:9668"/>
        <dbReference type="Rhea" id="RHEA-COMP:9699"/>
        <dbReference type="Rhea" id="RHEA-COMP:10636"/>
        <dbReference type="Rhea" id="RHEA-COMP:10637"/>
        <dbReference type="ChEBI" id="CHEBI:78442"/>
        <dbReference type="ChEBI" id="CHEBI:78531"/>
        <dbReference type="ChEBI" id="CHEBI:78597"/>
        <dbReference type="ChEBI" id="CHEBI:83561"/>
        <dbReference type="EC" id="2.3.2.6"/>
    </reaction>
</comment>
<comment type="subcellular location">
    <subcellularLocation>
        <location evidence="1">Cytoplasm</location>
    </subcellularLocation>
</comment>
<comment type="similarity">
    <text evidence="1">Belongs to the L/F-transferase family.</text>
</comment>
<evidence type="ECO:0000255" key="1">
    <source>
        <dbReference type="HAMAP-Rule" id="MF_00688"/>
    </source>
</evidence>